<comment type="catalytic activity">
    <reaction evidence="1">
        <text>tRNA(Gly) + glycine + ATP = glycyl-tRNA(Gly) + AMP + diphosphate</text>
        <dbReference type="Rhea" id="RHEA:16013"/>
        <dbReference type="Rhea" id="RHEA-COMP:9664"/>
        <dbReference type="Rhea" id="RHEA-COMP:9683"/>
        <dbReference type="ChEBI" id="CHEBI:30616"/>
        <dbReference type="ChEBI" id="CHEBI:33019"/>
        <dbReference type="ChEBI" id="CHEBI:57305"/>
        <dbReference type="ChEBI" id="CHEBI:78442"/>
        <dbReference type="ChEBI" id="CHEBI:78522"/>
        <dbReference type="ChEBI" id="CHEBI:456215"/>
        <dbReference type="EC" id="6.1.1.14"/>
    </reaction>
</comment>
<comment type="subunit">
    <text evidence="1">Tetramer of two alpha and two beta subunits.</text>
</comment>
<comment type="subcellular location">
    <subcellularLocation>
        <location evidence="1">Cytoplasm</location>
    </subcellularLocation>
</comment>
<comment type="similarity">
    <text evidence="1">Belongs to the class-II aminoacyl-tRNA synthetase family.</text>
</comment>
<reference key="1">
    <citation type="journal article" date="2002" name="Nature">
        <title>Genome sequence of the plant pathogen Ralstonia solanacearum.</title>
        <authorList>
            <person name="Salanoubat M."/>
            <person name="Genin S."/>
            <person name="Artiguenave F."/>
            <person name="Gouzy J."/>
            <person name="Mangenot S."/>
            <person name="Arlat M."/>
            <person name="Billault A."/>
            <person name="Brottier P."/>
            <person name="Camus J.-C."/>
            <person name="Cattolico L."/>
            <person name="Chandler M."/>
            <person name="Choisne N."/>
            <person name="Claudel-Renard C."/>
            <person name="Cunnac S."/>
            <person name="Demange N."/>
            <person name="Gaspin C."/>
            <person name="Lavie M."/>
            <person name="Moisan A."/>
            <person name="Robert C."/>
            <person name="Saurin W."/>
            <person name="Schiex T."/>
            <person name="Siguier P."/>
            <person name="Thebault P."/>
            <person name="Whalen M."/>
            <person name="Wincker P."/>
            <person name="Levy M."/>
            <person name="Weissenbach J."/>
            <person name="Boucher C.A."/>
        </authorList>
    </citation>
    <scope>NUCLEOTIDE SEQUENCE [LARGE SCALE GENOMIC DNA]</scope>
    <source>
        <strain>ATCC BAA-1114 / GMI1000</strain>
    </source>
</reference>
<name>SYGB_RALN1</name>
<dbReference type="EC" id="6.1.1.14" evidence="1"/>
<dbReference type="EMBL" id="AL646052">
    <property type="protein sequence ID" value="CAD14052.1"/>
    <property type="molecule type" value="Genomic_DNA"/>
</dbReference>
<dbReference type="RefSeq" id="WP_011000483.1">
    <property type="nucleotide sequence ID" value="NC_003295.1"/>
</dbReference>
<dbReference type="SMR" id="Q8Y213"/>
<dbReference type="STRING" id="267608.RSc0524"/>
<dbReference type="EnsemblBacteria" id="CAD14052">
    <property type="protein sequence ID" value="CAD14052"/>
    <property type="gene ID" value="RSc0524"/>
</dbReference>
<dbReference type="KEGG" id="rso:RSc0524"/>
<dbReference type="PATRIC" id="fig|267608.8.peg.546"/>
<dbReference type="eggNOG" id="COG0751">
    <property type="taxonomic scope" value="Bacteria"/>
</dbReference>
<dbReference type="HOGENOM" id="CLU_007220_2_2_4"/>
<dbReference type="Proteomes" id="UP000001436">
    <property type="component" value="Chromosome"/>
</dbReference>
<dbReference type="GO" id="GO:0005829">
    <property type="term" value="C:cytosol"/>
    <property type="evidence" value="ECO:0007669"/>
    <property type="project" value="TreeGrafter"/>
</dbReference>
<dbReference type="GO" id="GO:0004814">
    <property type="term" value="F:arginine-tRNA ligase activity"/>
    <property type="evidence" value="ECO:0007669"/>
    <property type="project" value="InterPro"/>
</dbReference>
<dbReference type="GO" id="GO:0005524">
    <property type="term" value="F:ATP binding"/>
    <property type="evidence" value="ECO:0007669"/>
    <property type="project" value="UniProtKB-UniRule"/>
</dbReference>
<dbReference type="GO" id="GO:0004820">
    <property type="term" value="F:glycine-tRNA ligase activity"/>
    <property type="evidence" value="ECO:0007669"/>
    <property type="project" value="UniProtKB-UniRule"/>
</dbReference>
<dbReference type="GO" id="GO:0006420">
    <property type="term" value="P:arginyl-tRNA aminoacylation"/>
    <property type="evidence" value="ECO:0007669"/>
    <property type="project" value="InterPro"/>
</dbReference>
<dbReference type="GO" id="GO:0006426">
    <property type="term" value="P:glycyl-tRNA aminoacylation"/>
    <property type="evidence" value="ECO:0007669"/>
    <property type="project" value="UniProtKB-UniRule"/>
</dbReference>
<dbReference type="HAMAP" id="MF_00255">
    <property type="entry name" value="Gly_tRNA_synth_beta"/>
    <property type="match status" value="1"/>
</dbReference>
<dbReference type="InterPro" id="IPR008909">
    <property type="entry name" value="DALR_anticod-bd"/>
</dbReference>
<dbReference type="InterPro" id="IPR015944">
    <property type="entry name" value="Gly-tRNA-synth_bsu"/>
</dbReference>
<dbReference type="InterPro" id="IPR006194">
    <property type="entry name" value="Gly-tRNA-synth_heterodimer"/>
</dbReference>
<dbReference type="NCBIfam" id="TIGR00211">
    <property type="entry name" value="glyS"/>
    <property type="match status" value="1"/>
</dbReference>
<dbReference type="PANTHER" id="PTHR30075:SF2">
    <property type="entry name" value="GLYCINE--TRNA LIGASE, CHLOROPLASTIC_MITOCHONDRIAL 2"/>
    <property type="match status" value="1"/>
</dbReference>
<dbReference type="PANTHER" id="PTHR30075">
    <property type="entry name" value="GLYCYL-TRNA SYNTHETASE"/>
    <property type="match status" value="1"/>
</dbReference>
<dbReference type="Pfam" id="PF05746">
    <property type="entry name" value="DALR_1"/>
    <property type="match status" value="1"/>
</dbReference>
<dbReference type="Pfam" id="PF02092">
    <property type="entry name" value="tRNA_synt_2f"/>
    <property type="match status" value="1"/>
</dbReference>
<dbReference type="PRINTS" id="PR01045">
    <property type="entry name" value="TRNASYNTHGB"/>
</dbReference>
<dbReference type="SMART" id="SM00836">
    <property type="entry name" value="DALR_1"/>
    <property type="match status" value="1"/>
</dbReference>
<dbReference type="SUPFAM" id="SSF109604">
    <property type="entry name" value="HD-domain/PDEase-like"/>
    <property type="match status" value="1"/>
</dbReference>
<dbReference type="PROSITE" id="PS50861">
    <property type="entry name" value="AA_TRNA_LIGASE_II_GLYAB"/>
    <property type="match status" value="1"/>
</dbReference>
<feature type="chain" id="PRO_0000072921" description="Glycine--tRNA ligase beta subunit">
    <location>
        <begin position="1"/>
        <end position="697"/>
    </location>
</feature>
<organism>
    <name type="scientific">Ralstonia nicotianae (strain ATCC BAA-1114 / GMI1000)</name>
    <name type="common">Ralstonia solanacearum</name>
    <dbReference type="NCBI Taxonomy" id="267608"/>
    <lineage>
        <taxon>Bacteria</taxon>
        <taxon>Pseudomonadati</taxon>
        <taxon>Pseudomonadota</taxon>
        <taxon>Betaproteobacteria</taxon>
        <taxon>Burkholderiales</taxon>
        <taxon>Burkholderiaceae</taxon>
        <taxon>Ralstonia</taxon>
        <taxon>Ralstonia solanacearum species complex</taxon>
    </lineage>
</organism>
<accession>Q8Y213</accession>
<evidence type="ECO:0000255" key="1">
    <source>
        <dbReference type="HAMAP-Rule" id="MF_00255"/>
    </source>
</evidence>
<gene>
    <name evidence="1" type="primary">glyS</name>
    <name type="ordered locus">RSc0524</name>
    <name type="ORF">RS04944</name>
</gene>
<proteinExistence type="inferred from homology"/>
<protein>
    <recommendedName>
        <fullName evidence="1">Glycine--tRNA ligase beta subunit</fullName>
        <ecNumber evidence="1">6.1.1.14</ecNumber>
    </recommendedName>
    <alternativeName>
        <fullName evidence="1">Glycyl-tRNA synthetase beta subunit</fullName>
        <shortName evidence="1">GlyRS</shortName>
    </alternativeName>
</protein>
<sequence>MSTLLIELLTEELPPKALARLGEAFAQSLFDGLSAQGLLEEGAQVEGFATPRRLAASITGVRRAAPDRELREKVLPVNIAFDAEGKPTAPLTKKLAALAKSIGADTIAPESLERAPDGKAESLFHRYTARGAVLADGLQAALSQTIAGLPIPKVMIYQRPNGDNVQFVRPAHRLIALLDDEIIPAGVLGLQSGNVTLGHRFLSAGEIIIPHATAYASTLKSQGKVIAGYAERKEAIRAELLKAAGADTVVMPEALLDEVNALVEWPVVYPCHFEEQFLAVPQECLILTMQTNQKYFALTDAQGHLRNRFLIVSNLATETPQAIIEGNERVVRPRLADARFFFEHDKKKPLADRVPQLARVVYHNKIGTQLERVSRLQAIAGQLAEKLGAEVAHASRAALLAKADLLTDMVGEFPELQGTMGTYYARHDGEAEDVALACSEHYQPRFAGDALPGTATGTVVALADKLETLVGIWGIGLAPTGEKDPFALRRHALGILRMLIEKPLALGIAEVLEAAAASFEGIAAVKPDLAAITDFLYDRLRGYLKDKGYSTNEVEAVVSQRPQRLDDIVARLEAVRAFAALPQAEALAAANKRITNILKKTDITIGSVQPQLLREDAERALHQAVATSEPHVHDAFARGDFTTALKTLASLREAVDSFFDGVMVMADDTALRDNRLALLGELHGLMNRVADISKLAA</sequence>
<keyword id="KW-0030">Aminoacyl-tRNA synthetase</keyword>
<keyword id="KW-0067">ATP-binding</keyword>
<keyword id="KW-0963">Cytoplasm</keyword>
<keyword id="KW-0436">Ligase</keyword>
<keyword id="KW-0547">Nucleotide-binding</keyword>
<keyword id="KW-0648">Protein biosynthesis</keyword>
<keyword id="KW-1185">Reference proteome</keyword>